<feature type="chain" id="PRO_0000301426" description="UDP-N-acetylmuramoylalanine--D-glutamate ligase">
    <location>
        <begin position="1"/>
        <end position="417"/>
    </location>
</feature>
<feature type="binding site" evidence="1">
    <location>
        <begin position="104"/>
        <end position="110"/>
    </location>
    <ligand>
        <name>ATP</name>
        <dbReference type="ChEBI" id="CHEBI:30616"/>
    </ligand>
</feature>
<proteinExistence type="inferred from homology"/>
<sequence>MFSFYFNDNKITKLLMVGYGSTGKSVCDFLANFIDITVDISQNDDEFVNYDLGSYDLITVSPGIPLNKSPYRVLTKFKDKIVSDIDIFYQYIKDTKAKTIAVTGSNGKSTVVTMTDFVLKDLGYKSILVGNIGTPALNKIGEKFDYCVVEVSSFQIDLFNCVRFDLGCIINVSPDHLDRYQNFEQYKQSKLNLAKFSNDFFVYDVHNNGIKYAGEYQIIRGAIYRNSTKLLDIAETKLFGEHNLENIIVVLNILDRLGLDINQAIDSIKKFKGLEHRCKIVKKVNGTTYINDSKGTNVGATIAALNSITNSKNIILLLGGVAKGGDFSLMIKSLDKYVKYVYIYGADKEYIESYIKGYCKYQLCNNMKQAFELASQKANSNEIVLLSPACASFDEFSGYAQRGEVFQNLVAQLEQKS</sequence>
<organism>
    <name type="scientific">Francisella tularensis subsp. novicida (strain U112)</name>
    <dbReference type="NCBI Taxonomy" id="401614"/>
    <lineage>
        <taxon>Bacteria</taxon>
        <taxon>Pseudomonadati</taxon>
        <taxon>Pseudomonadota</taxon>
        <taxon>Gammaproteobacteria</taxon>
        <taxon>Thiotrichales</taxon>
        <taxon>Francisellaceae</taxon>
        <taxon>Francisella</taxon>
    </lineage>
</organism>
<gene>
    <name evidence="1" type="primary">murD</name>
    <name type="ordered locus">FTN_0542</name>
</gene>
<protein>
    <recommendedName>
        <fullName evidence="1">UDP-N-acetylmuramoylalanine--D-glutamate ligase</fullName>
        <ecNumber evidence="1">6.3.2.9</ecNumber>
    </recommendedName>
    <alternativeName>
        <fullName evidence="1">D-glutamic acid-adding enzyme</fullName>
    </alternativeName>
    <alternativeName>
        <fullName evidence="1">UDP-N-acetylmuramoyl-L-alanyl-D-glutamate synthetase</fullName>
    </alternativeName>
</protein>
<evidence type="ECO:0000255" key="1">
    <source>
        <dbReference type="HAMAP-Rule" id="MF_00639"/>
    </source>
</evidence>
<accession>A0Q5C2</accession>
<reference key="1">
    <citation type="journal article" date="2007" name="Genome Biol.">
        <title>Comparison of Francisella tularensis genomes reveals evolutionary events associated with the emergence of human pathogenic strains.</title>
        <authorList>
            <person name="Rohmer L."/>
            <person name="Fong C."/>
            <person name="Abmayr S."/>
            <person name="Wasnick M."/>
            <person name="Larson Freeman T.J."/>
            <person name="Radey M."/>
            <person name="Guina T."/>
            <person name="Svensson K."/>
            <person name="Hayden H.S."/>
            <person name="Jacobs M."/>
            <person name="Gallagher L.A."/>
            <person name="Manoil C."/>
            <person name="Ernst R.K."/>
            <person name="Drees B."/>
            <person name="Buckley D."/>
            <person name="Haugen E."/>
            <person name="Bovee D."/>
            <person name="Zhou Y."/>
            <person name="Chang J."/>
            <person name="Levy R."/>
            <person name="Lim R."/>
            <person name="Gillett W."/>
            <person name="Guenthener D."/>
            <person name="Kang A."/>
            <person name="Shaffer S.A."/>
            <person name="Taylor G."/>
            <person name="Chen J."/>
            <person name="Gallis B."/>
            <person name="D'Argenio D.A."/>
            <person name="Forsman M."/>
            <person name="Olson M.V."/>
            <person name="Goodlett D.R."/>
            <person name="Kaul R."/>
            <person name="Miller S.I."/>
            <person name="Brittnacher M.J."/>
        </authorList>
    </citation>
    <scope>NUCLEOTIDE SEQUENCE [LARGE SCALE GENOMIC DNA]</scope>
    <source>
        <strain>U112</strain>
    </source>
</reference>
<comment type="function">
    <text evidence="1">Cell wall formation. Catalyzes the addition of glutamate to the nucleotide precursor UDP-N-acetylmuramoyl-L-alanine (UMA).</text>
</comment>
<comment type="catalytic activity">
    <reaction evidence="1">
        <text>UDP-N-acetyl-alpha-D-muramoyl-L-alanine + D-glutamate + ATP = UDP-N-acetyl-alpha-D-muramoyl-L-alanyl-D-glutamate + ADP + phosphate + H(+)</text>
        <dbReference type="Rhea" id="RHEA:16429"/>
        <dbReference type="ChEBI" id="CHEBI:15378"/>
        <dbReference type="ChEBI" id="CHEBI:29986"/>
        <dbReference type="ChEBI" id="CHEBI:30616"/>
        <dbReference type="ChEBI" id="CHEBI:43474"/>
        <dbReference type="ChEBI" id="CHEBI:83898"/>
        <dbReference type="ChEBI" id="CHEBI:83900"/>
        <dbReference type="ChEBI" id="CHEBI:456216"/>
        <dbReference type="EC" id="6.3.2.9"/>
    </reaction>
</comment>
<comment type="pathway">
    <text evidence="1">Cell wall biogenesis; peptidoglycan biosynthesis.</text>
</comment>
<comment type="subcellular location">
    <subcellularLocation>
        <location evidence="1">Cytoplasm</location>
    </subcellularLocation>
</comment>
<comment type="similarity">
    <text evidence="1">Belongs to the MurCDEF family.</text>
</comment>
<name>MURD_FRATN</name>
<keyword id="KW-0067">ATP-binding</keyword>
<keyword id="KW-0131">Cell cycle</keyword>
<keyword id="KW-0132">Cell division</keyword>
<keyword id="KW-0133">Cell shape</keyword>
<keyword id="KW-0961">Cell wall biogenesis/degradation</keyword>
<keyword id="KW-0963">Cytoplasm</keyword>
<keyword id="KW-0436">Ligase</keyword>
<keyword id="KW-0547">Nucleotide-binding</keyword>
<keyword id="KW-0573">Peptidoglycan synthesis</keyword>
<dbReference type="EC" id="6.3.2.9" evidence="1"/>
<dbReference type="EMBL" id="CP000439">
    <property type="protein sequence ID" value="ABK89437.1"/>
    <property type="molecule type" value="Genomic_DNA"/>
</dbReference>
<dbReference type="RefSeq" id="WP_003035764.1">
    <property type="nucleotide sequence ID" value="NZ_CP009633.1"/>
</dbReference>
<dbReference type="SMR" id="A0Q5C2"/>
<dbReference type="GeneID" id="75263972"/>
<dbReference type="KEGG" id="ftn:FTN_0542"/>
<dbReference type="KEGG" id="ftx:AW25_1487"/>
<dbReference type="BioCyc" id="FTUL401614:G1G75-564-MONOMER"/>
<dbReference type="UniPathway" id="UPA00219"/>
<dbReference type="Proteomes" id="UP000000762">
    <property type="component" value="Chromosome"/>
</dbReference>
<dbReference type="GO" id="GO:0005737">
    <property type="term" value="C:cytoplasm"/>
    <property type="evidence" value="ECO:0007669"/>
    <property type="project" value="UniProtKB-SubCell"/>
</dbReference>
<dbReference type="GO" id="GO:0005524">
    <property type="term" value="F:ATP binding"/>
    <property type="evidence" value="ECO:0007669"/>
    <property type="project" value="UniProtKB-UniRule"/>
</dbReference>
<dbReference type="GO" id="GO:0008764">
    <property type="term" value="F:UDP-N-acetylmuramoylalanine-D-glutamate ligase activity"/>
    <property type="evidence" value="ECO:0007669"/>
    <property type="project" value="UniProtKB-UniRule"/>
</dbReference>
<dbReference type="GO" id="GO:0051301">
    <property type="term" value="P:cell division"/>
    <property type="evidence" value="ECO:0007669"/>
    <property type="project" value="UniProtKB-KW"/>
</dbReference>
<dbReference type="GO" id="GO:0071555">
    <property type="term" value="P:cell wall organization"/>
    <property type="evidence" value="ECO:0007669"/>
    <property type="project" value="UniProtKB-KW"/>
</dbReference>
<dbReference type="GO" id="GO:0009252">
    <property type="term" value="P:peptidoglycan biosynthetic process"/>
    <property type="evidence" value="ECO:0007669"/>
    <property type="project" value="UniProtKB-UniRule"/>
</dbReference>
<dbReference type="GO" id="GO:0008360">
    <property type="term" value="P:regulation of cell shape"/>
    <property type="evidence" value="ECO:0007669"/>
    <property type="project" value="UniProtKB-KW"/>
</dbReference>
<dbReference type="Gene3D" id="3.90.190.20">
    <property type="entry name" value="Mur ligase, C-terminal domain"/>
    <property type="match status" value="1"/>
</dbReference>
<dbReference type="Gene3D" id="3.40.1190.10">
    <property type="entry name" value="Mur-like, catalytic domain"/>
    <property type="match status" value="1"/>
</dbReference>
<dbReference type="HAMAP" id="MF_00639">
    <property type="entry name" value="MurD"/>
    <property type="match status" value="1"/>
</dbReference>
<dbReference type="InterPro" id="IPR036565">
    <property type="entry name" value="Mur-like_cat_sf"/>
</dbReference>
<dbReference type="InterPro" id="IPR004101">
    <property type="entry name" value="Mur_ligase_C"/>
</dbReference>
<dbReference type="InterPro" id="IPR036615">
    <property type="entry name" value="Mur_ligase_C_dom_sf"/>
</dbReference>
<dbReference type="InterPro" id="IPR013221">
    <property type="entry name" value="Mur_ligase_cen"/>
</dbReference>
<dbReference type="InterPro" id="IPR005762">
    <property type="entry name" value="MurD"/>
</dbReference>
<dbReference type="NCBIfam" id="TIGR01087">
    <property type="entry name" value="murD"/>
    <property type="match status" value="1"/>
</dbReference>
<dbReference type="PANTHER" id="PTHR43692">
    <property type="entry name" value="UDP-N-ACETYLMURAMOYLALANINE--D-GLUTAMATE LIGASE"/>
    <property type="match status" value="1"/>
</dbReference>
<dbReference type="PANTHER" id="PTHR43692:SF1">
    <property type="entry name" value="UDP-N-ACETYLMURAMOYLALANINE--D-GLUTAMATE LIGASE"/>
    <property type="match status" value="1"/>
</dbReference>
<dbReference type="Pfam" id="PF02875">
    <property type="entry name" value="Mur_ligase_C"/>
    <property type="match status" value="1"/>
</dbReference>
<dbReference type="Pfam" id="PF08245">
    <property type="entry name" value="Mur_ligase_M"/>
    <property type="match status" value="1"/>
</dbReference>
<dbReference type="SUPFAM" id="SSF53623">
    <property type="entry name" value="MurD-like peptide ligases, catalytic domain"/>
    <property type="match status" value="1"/>
</dbReference>
<dbReference type="SUPFAM" id="SSF53244">
    <property type="entry name" value="MurD-like peptide ligases, peptide-binding domain"/>
    <property type="match status" value="1"/>
</dbReference>